<proteinExistence type="inferred from homology"/>
<keyword id="KW-0067">ATP-binding</keyword>
<keyword id="KW-0436">Ligase</keyword>
<keyword id="KW-0547">Nucleotide-binding</keyword>
<keyword id="KW-0648">Protein biosynthesis</keyword>
<evidence type="ECO:0000255" key="1">
    <source>
        <dbReference type="HAMAP-Rule" id="MF_00122"/>
    </source>
</evidence>
<protein>
    <recommendedName>
        <fullName evidence="1">Aspartyl/glutamyl-tRNA(Asn/Gln) amidotransferase subunit C</fullName>
        <shortName evidence="1">Asp/Glu-ADT subunit C</shortName>
        <ecNumber evidence="1">6.3.5.-</ecNumber>
    </recommendedName>
</protein>
<accession>B4U196</accession>
<sequence>MKISEEEVRHVAALSKLSFSESETTEFATTLSKIVDMVELLNEVDTTGIAITTTMADKKNIMRADIAEAGVDRKFLFQNVPEKENHFIKVPAILDDGGDA</sequence>
<gene>
    <name evidence="1" type="primary">gatC</name>
    <name type="ordered locus">Sez_0389</name>
</gene>
<organism>
    <name type="scientific">Streptococcus equi subsp. zooepidemicus (strain MGCS10565)</name>
    <dbReference type="NCBI Taxonomy" id="552526"/>
    <lineage>
        <taxon>Bacteria</taxon>
        <taxon>Bacillati</taxon>
        <taxon>Bacillota</taxon>
        <taxon>Bacilli</taxon>
        <taxon>Lactobacillales</taxon>
        <taxon>Streptococcaceae</taxon>
        <taxon>Streptococcus</taxon>
    </lineage>
</organism>
<dbReference type="EC" id="6.3.5.-" evidence="1"/>
<dbReference type="EMBL" id="CP001129">
    <property type="protein sequence ID" value="ACG61763.1"/>
    <property type="molecule type" value="Genomic_DNA"/>
</dbReference>
<dbReference type="RefSeq" id="WP_012515039.1">
    <property type="nucleotide sequence ID" value="NC_011134.1"/>
</dbReference>
<dbReference type="SMR" id="B4U196"/>
<dbReference type="KEGG" id="sez:Sez_0389"/>
<dbReference type="HOGENOM" id="CLU_105899_1_2_9"/>
<dbReference type="Proteomes" id="UP000001873">
    <property type="component" value="Chromosome"/>
</dbReference>
<dbReference type="GO" id="GO:0050566">
    <property type="term" value="F:asparaginyl-tRNA synthase (glutamine-hydrolyzing) activity"/>
    <property type="evidence" value="ECO:0007669"/>
    <property type="project" value="RHEA"/>
</dbReference>
<dbReference type="GO" id="GO:0005524">
    <property type="term" value="F:ATP binding"/>
    <property type="evidence" value="ECO:0007669"/>
    <property type="project" value="UniProtKB-KW"/>
</dbReference>
<dbReference type="GO" id="GO:0050567">
    <property type="term" value="F:glutaminyl-tRNA synthase (glutamine-hydrolyzing) activity"/>
    <property type="evidence" value="ECO:0007669"/>
    <property type="project" value="UniProtKB-UniRule"/>
</dbReference>
<dbReference type="GO" id="GO:0070681">
    <property type="term" value="P:glutaminyl-tRNAGln biosynthesis via transamidation"/>
    <property type="evidence" value="ECO:0007669"/>
    <property type="project" value="TreeGrafter"/>
</dbReference>
<dbReference type="GO" id="GO:0006450">
    <property type="term" value="P:regulation of translational fidelity"/>
    <property type="evidence" value="ECO:0007669"/>
    <property type="project" value="InterPro"/>
</dbReference>
<dbReference type="GO" id="GO:0006412">
    <property type="term" value="P:translation"/>
    <property type="evidence" value="ECO:0007669"/>
    <property type="project" value="UniProtKB-UniRule"/>
</dbReference>
<dbReference type="Gene3D" id="1.10.20.60">
    <property type="entry name" value="Glu-tRNAGln amidotransferase C subunit, N-terminal domain"/>
    <property type="match status" value="1"/>
</dbReference>
<dbReference type="HAMAP" id="MF_00122">
    <property type="entry name" value="GatC"/>
    <property type="match status" value="1"/>
</dbReference>
<dbReference type="InterPro" id="IPR036113">
    <property type="entry name" value="Asp/Glu-ADT_sf_sub_c"/>
</dbReference>
<dbReference type="InterPro" id="IPR003837">
    <property type="entry name" value="GatC"/>
</dbReference>
<dbReference type="NCBIfam" id="TIGR00135">
    <property type="entry name" value="gatC"/>
    <property type="match status" value="1"/>
</dbReference>
<dbReference type="PANTHER" id="PTHR15004">
    <property type="entry name" value="GLUTAMYL-TRNA(GLN) AMIDOTRANSFERASE SUBUNIT C, MITOCHONDRIAL"/>
    <property type="match status" value="1"/>
</dbReference>
<dbReference type="PANTHER" id="PTHR15004:SF0">
    <property type="entry name" value="GLUTAMYL-TRNA(GLN) AMIDOTRANSFERASE SUBUNIT C, MITOCHONDRIAL"/>
    <property type="match status" value="1"/>
</dbReference>
<dbReference type="Pfam" id="PF02686">
    <property type="entry name" value="GatC"/>
    <property type="match status" value="1"/>
</dbReference>
<dbReference type="SUPFAM" id="SSF141000">
    <property type="entry name" value="Glu-tRNAGln amidotransferase C subunit"/>
    <property type="match status" value="1"/>
</dbReference>
<reference key="1">
    <citation type="journal article" date="2008" name="PLoS ONE">
        <title>Genome sequence of a lancefield group C Streptococcus zooepidemicus strain causing epidemic nephritis: new information about an old disease.</title>
        <authorList>
            <person name="Beres S.B."/>
            <person name="Sesso R."/>
            <person name="Pinto S.W.L."/>
            <person name="Hoe N.P."/>
            <person name="Porcella S.F."/>
            <person name="Deleo F.R."/>
            <person name="Musser J.M."/>
        </authorList>
    </citation>
    <scope>NUCLEOTIDE SEQUENCE [LARGE SCALE GENOMIC DNA]</scope>
    <source>
        <strain>MGCS10565</strain>
    </source>
</reference>
<name>GATC_STREM</name>
<comment type="function">
    <text evidence="1">Allows the formation of correctly charged Asn-tRNA(Asn) or Gln-tRNA(Gln) through the transamidation of misacylated Asp-tRNA(Asn) or Glu-tRNA(Gln) in organisms which lack either or both of asparaginyl-tRNA or glutaminyl-tRNA synthetases. The reaction takes place in the presence of glutamine and ATP through an activated phospho-Asp-tRNA(Asn) or phospho-Glu-tRNA(Gln).</text>
</comment>
<comment type="catalytic activity">
    <reaction evidence="1">
        <text>L-glutamyl-tRNA(Gln) + L-glutamine + ATP + H2O = L-glutaminyl-tRNA(Gln) + L-glutamate + ADP + phosphate + H(+)</text>
        <dbReference type="Rhea" id="RHEA:17521"/>
        <dbReference type="Rhea" id="RHEA-COMP:9681"/>
        <dbReference type="Rhea" id="RHEA-COMP:9684"/>
        <dbReference type="ChEBI" id="CHEBI:15377"/>
        <dbReference type="ChEBI" id="CHEBI:15378"/>
        <dbReference type="ChEBI" id="CHEBI:29985"/>
        <dbReference type="ChEBI" id="CHEBI:30616"/>
        <dbReference type="ChEBI" id="CHEBI:43474"/>
        <dbReference type="ChEBI" id="CHEBI:58359"/>
        <dbReference type="ChEBI" id="CHEBI:78520"/>
        <dbReference type="ChEBI" id="CHEBI:78521"/>
        <dbReference type="ChEBI" id="CHEBI:456216"/>
    </reaction>
</comment>
<comment type="catalytic activity">
    <reaction evidence="1">
        <text>L-aspartyl-tRNA(Asn) + L-glutamine + ATP + H2O = L-asparaginyl-tRNA(Asn) + L-glutamate + ADP + phosphate + 2 H(+)</text>
        <dbReference type="Rhea" id="RHEA:14513"/>
        <dbReference type="Rhea" id="RHEA-COMP:9674"/>
        <dbReference type="Rhea" id="RHEA-COMP:9677"/>
        <dbReference type="ChEBI" id="CHEBI:15377"/>
        <dbReference type="ChEBI" id="CHEBI:15378"/>
        <dbReference type="ChEBI" id="CHEBI:29985"/>
        <dbReference type="ChEBI" id="CHEBI:30616"/>
        <dbReference type="ChEBI" id="CHEBI:43474"/>
        <dbReference type="ChEBI" id="CHEBI:58359"/>
        <dbReference type="ChEBI" id="CHEBI:78515"/>
        <dbReference type="ChEBI" id="CHEBI:78516"/>
        <dbReference type="ChEBI" id="CHEBI:456216"/>
    </reaction>
</comment>
<comment type="subunit">
    <text evidence="1">Heterotrimer of A, B and C subunits.</text>
</comment>
<comment type="similarity">
    <text evidence="1">Belongs to the GatC family.</text>
</comment>
<feature type="chain" id="PRO_1000095314" description="Aspartyl/glutamyl-tRNA(Asn/Gln) amidotransferase subunit C">
    <location>
        <begin position="1"/>
        <end position="100"/>
    </location>
</feature>